<gene>
    <name evidence="1" type="primary">hisA</name>
    <name type="ordered locus">Sama_1946</name>
</gene>
<feature type="chain" id="PRO_0000290534" description="1-(5-phosphoribosyl)-5-[(5-phosphoribosylamino)methylideneamino] imidazole-4-carboxamide isomerase">
    <location>
        <begin position="1"/>
        <end position="245"/>
    </location>
</feature>
<feature type="active site" description="Proton acceptor" evidence="1">
    <location>
        <position position="7"/>
    </location>
</feature>
<feature type="active site" description="Proton donor" evidence="1">
    <location>
        <position position="129"/>
    </location>
</feature>
<proteinExistence type="inferred from homology"/>
<evidence type="ECO:0000255" key="1">
    <source>
        <dbReference type="HAMAP-Rule" id="MF_01014"/>
    </source>
</evidence>
<reference key="1">
    <citation type="submission" date="2006-12" db="EMBL/GenBank/DDBJ databases">
        <title>Complete sequence of Shewanella amazonensis SB2B.</title>
        <authorList>
            <consortium name="US DOE Joint Genome Institute"/>
            <person name="Copeland A."/>
            <person name="Lucas S."/>
            <person name="Lapidus A."/>
            <person name="Barry K."/>
            <person name="Detter J.C."/>
            <person name="Glavina del Rio T."/>
            <person name="Hammon N."/>
            <person name="Israni S."/>
            <person name="Dalin E."/>
            <person name="Tice H."/>
            <person name="Pitluck S."/>
            <person name="Munk A.C."/>
            <person name="Brettin T."/>
            <person name="Bruce D."/>
            <person name="Han C."/>
            <person name="Tapia R."/>
            <person name="Gilna P."/>
            <person name="Schmutz J."/>
            <person name="Larimer F."/>
            <person name="Land M."/>
            <person name="Hauser L."/>
            <person name="Kyrpides N."/>
            <person name="Mikhailova N."/>
            <person name="Fredrickson J."/>
            <person name="Richardson P."/>
        </authorList>
    </citation>
    <scope>NUCLEOTIDE SEQUENCE [LARGE SCALE GENOMIC DNA]</scope>
    <source>
        <strain>ATCC BAA-1098 / SB2B</strain>
    </source>
</reference>
<name>HIS4_SHEAM</name>
<accession>A1S6Z5</accession>
<dbReference type="EC" id="5.3.1.16" evidence="1"/>
<dbReference type="EMBL" id="CP000507">
    <property type="protein sequence ID" value="ABM00152.1"/>
    <property type="molecule type" value="Genomic_DNA"/>
</dbReference>
<dbReference type="RefSeq" id="WP_011760059.1">
    <property type="nucleotide sequence ID" value="NC_008700.1"/>
</dbReference>
<dbReference type="SMR" id="A1S6Z5"/>
<dbReference type="STRING" id="326297.Sama_1946"/>
<dbReference type="KEGG" id="saz:Sama_1946"/>
<dbReference type="eggNOG" id="COG0106">
    <property type="taxonomic scope" value="Bacteria"/>
</dbReference>
<dbReference type="HOGENOM" id="CLU_048577_1_2_6"/>
<dbReference type="OrthoDB" id="9807749at2"/>
<dbReference type="UniPathway" id="UPA00031">
    <property type="reaction ID" value="UER00009"/>
</dbReference>
<dbReference type="Proteomes" id="UP000009175">
    <property type="component" value="Chromosome"/>
</dbReference>
<dbReference type="GO" id="GO:0005737">
    <property type="term" value="C:cytoplasm"/>
    <property type="evidence" value="ECO:0007669"/>
    <property type="project" value="UniProtKB-SubCell"/>
</dbReference>
<dbReference type="GO" id="GO:0003949">
    <property type="term" value="F:1-(5-phosphoribosyl)-5-[(5-phosphoribosylamino)methylideneamino]imidazole-4-carboxamide isomerase activity"/>
    <property type="evidence" value="ECO:0007669"/>
    <property type="project" value="UniProtKB-UniRule"/>
</dbReference>
<dbReference type="GO" id="GO:0000105">
    <property type="term" value="P:L-histidine biosynthetic process"/>
    <property type="evidence" value="ECO:0007669"/>
    <property type="project" value="UniProtKB-UniRule"/>
</dbReference>
<dbReference type="GO" id="GO:0000162">
    <property type="term" value="P:L-tryptophan biosynthetic process"/>
    <property type="evidence" value="ECO:0007669"/>
    <property type="project" value="TreeGrafter"/>
</dbReference>
<dbReference type="CDD" id="cd04732">
    <property type="entry name" value="HisA"/>
    <property type="match status" value="1"/>
</dbReference>
<dbReference type="FunFam" id="3.20.20.70:FF:000009">
    <property type="entry name" value="1-(5-phosphoribosyl)-5-[(5-phosphoribosylamino)methylideneamino] imidazole-4-carboxamide isomerase"/>
    <property type="match status" value="1"/>
</dbReference>
<dbReference type="Gene3D" id="3.20.20.70">
    <property type="entry name" value="Aldolase class I"/>
    <property type="match status" value="1"/>
</dbReference>
<dbReference type="HAMAP" id="MF_01014">
    <property type="entry name" value="HisA"/>
    <property type="match status" value="1"/>
</dbReference>
<dbReference type="InterPro" id="IPR013785">
    <property type="entry name" value="Aldolase_TIM"/>
</dbReference>
<dbReference type="InterPro" id="IPR006062">
    <property type="entry name" value="His_biosynth"/>
</dbReference>
<dbReference type="InterPro" id="IPR006063">
    <property type="entry name" value="HisA_bact_arch"/>
</dbReference>
<dbReference type="InterPro" id="IPR044524">
    <property type="entry name" value="Isoase_HisA-like"/>
</dbReference>
<dbReference type="InterPro" id="IPR023016">
    <property type="entry name" value="Isoase_HisA-like_bact"/>
</dbReference>
<dbReference type="InterPro" id="IPR011060">
    <property type="entry name" value="RibuloseP-bd_barrel"/>
</dbReference>
<dbReference type="NCBIfam" id="TIGR00007">
    <property type="entry name" value="1-(5-phosphoribosyl)-5-[(5-phosphoribosylamino)methylideneamino]imidazole-4-carboxamide isomerase"/>
    <property type="match status" value="1"/>
</dbReference>
<dbReference type="PANTHER" id="PTHR43090">
    <property type="entry name" value="1-(5-PHOSPHORIBOSYL)-5-[(5-PHOSPHORIBOSYLAMINO)METHYLIDENEAMINO] IMIDAZOLE-4-CARBOXAMIDE ISOMERASE"/>
    <property type="match status" value="1"/>
</dbReference>
<dbReference type="PANTHER" id="PTHR43090:SF2">
    <property type="entry name" value="1-(5-PHOSPHORIBOSYL)-5-[(5-PHOSPHORIBOSYLAMINO)METHYLIDENEAMINO] IMIDAZOLE-4-CARBOXAMIDE ISOMERASE"/>
    <property type="match status" value="1"/>
</dbReference>
<dbReference type="Pfam" id="PF00977">
    <property type="entry name" value="His_biosynth"/>
    <property type="match status" value="1"/>
</dbReference>
<dbReference type="SUPFAM" id="SSF51366">
    <property type="entry name" value="Ribulose-phoshate binding barrel"/>
    <property type="match status" value="1"/>
</dbReference>
<organism>
    <name type="scientific">Shewanella amazonensis (strain ATCC BAA-1098 / SB2B)</name>
    <dbReference type="NCBI Taxonomy" id="326297"/>
    <lineage>
        <taxon>Bacteria</taxon>
        <taxon>Pseudomonadati</taxon>
        <taxon>Pseudomonadota</taxon>
        <taxon>Gammaproteobacteria</taxon>
        <taxon>Alteromonadales</taxon>
        <taxon>Shewanellaceae</taxon>
        <taxon>Shewanella</taxon>
    </lineage>
</organism>
<sequence length="245" mass="25764">MIIPAIDLIDGQVVRLFQGDYAKKTEFSLDPKNQLLSYQQDGAALLHLVDLTGAKDPDKRQTKLIEEIAASLSTPLQVGGGIRSAADVDALLNAGVARVVIGSLAVKSPEVVLRLFDKYGGDAICLALDVNIDADGNKMVAVHGWQQGGGKSLESLVDTFMPAGLKHALVTDISRDGTMTGANTALYCELAERFNEVQWQASGGVATLDDVKAVKTSGASGIIIGKALLTGVFSAKEAIACWPNV</sequence>
<comment type="catalytic activity">
    <reaction evidence="1">
        <text>1-(5-phospho-beta-D-ribosyl)-5-[(5-phospho-beta-D-ribosylamino)methylideneamino]imidazole-4-carboxamide = 5-[(5-phospho-1-deoxy-D-ribulos-1-ylimino)methylamino]-1-(5-phospho-beta-D-ribosyl)imidazole-4-carboxamide</text>
        <dbReference type="Rhea" id="RHEA:15469"/>
        <dbReference type="ChEBI" id="CHEBI:58435"/>
        <dbReference type="ChEBI" id="CHEBI:58525"/>
        <dbReference type="EC" id="5.3.1.16"/>
    </reaction>
</comment>
<comment type="pathway">
    <text evidence="1">Amino-acid biosynthesis; L-histidine biosynthesis; L-histidine from 5-phospho-alpha-D-ribose 1-diphosphate: step 4/9.</text>
</comment>
<comment type="subcellular location">
    <subcellularLocation>
        <location evidence="1">Cytoplasm</location>
    </subcellularLocation>
</comment>
<comment type="similarity">
    <text evidence="1">Belongs to the HisA/HisF family.</text>
</comment>
<protein>
    <recommendedName>
        <fullName evidence="1">1-(5-phosphoribosyl)-5-[(5-phosphoribosylamino)methylideneamino] imidazole-4-carboxamide isomerase</fullName>
        <ecNumber evidence="1">5.3.1.16</ecNumber>
    </recommendedName>
    <alternativeName>
        <fullName evidence="1">Phosphoribosylformimino-5-aminoimidazole carboxamide ribotide isomerase</fullName>
    </alternativeName>
</protein>
<keyword id="KW-0028">Amino-acid biosynthesis</keyword>
<keyword id="KW-0963">Cytoplasm</keyword>
<keyword id="KW-0368">Histidine biosynthesis</keyword>
<keyword id="KW-0413">Isomerase</keyword>
<keyword id="KW-1185">Reference proteome</keyword>